<keyword id="KW-0687">Ribonucleoprotein</keyword>
<keyword id="KW-0689">Ribosomal protein</keyword>
<gene>
    <name evidence="1" type="primary">rplL</name>
    <name type="ordered locus">CLJ_B3798</name>
</gene>
<comment type="function">
    <text evidence="1">Forms part of the ribosomal stalk which helps the ribosome interact with GTP-bound translation factors. Is thus essential for accurate translation.</text>
</comment>
<comment type="subunit">
    <text evidence="1">Homodimer. Part of the ribosomal stalk of the 50S ribosomal subunit. Forms a multimeric L10(L12)X complex, where L10 forms an elongated spine to which 2 to 4 L12 dimers bind in a sequential fashion. Binds GTP-bound translation factors.</text>
</comment>
<comment type="similarity">
    <text evidence="1">Belongs to the bacterial ribosomal protein bL12 family.</text>
</comment>
<evidence type="ECO:0000255" key="1">
    <source>
        <dbReference type="HAMAP-Rule" id="MF_00368"/>
    </source>
</evidence>
<evidence type="ECO:0000305" key="2"/>
<dbReference type="EMBL" id="CP001083">
    <property type="protein sequence ID" value="ACQ54782.1"/>
    <property type="molecule type" value="Genomic_DNA"/>
</dbReference>
<dbReference type="RefSeq" id="WP_003360186.1">
    <property type="nucleotide sequence ID" value="NC_012658.1"/>
</dbReference>
<dbReference type="SMR" id="C3KVR0"/>
<dbReference type="KEGG" id="cbi:CLJ_B3798"/>
<dbReference type="HOGENOM" id="CLU_086499_3_2_9"/>
<dbReference type="Proteomes" id="UP000002333">
    <property type="component" value="Chromosome"/>
</dbReference>
<dbReference type="GO" id="GO:0022625">
    <property type="term" value="C:cytosolic large ribosomal subunit"/>
    <property type="evidence" value="ECO:0007669"/>
    <property type="project" value="TreeGrafter"/>
</dbReference>
<dbReference type="GO" id="GO:0003729">
    <property type="term" value="F:mRNA binding"/>
    <property type="evidence" value="ECO:0007669"/>
    <property type="project" value="TreeGrafter"/>
</dbReference>
<dbReference type="GO" id="GO:0003735">
    <property type="term" value="F:structural constituent of ribosome"/>
    <property type="evidence" value="ECO:0007669"/>
    <property type="project" value="InterPro"/>
</dbReference>
<dbReference type="GO" id="GO:0006412">
    <property type="term" value="P:translation"/>
    <property type="evidence" value="ECO:0007669"/>
    <property type="project" value="UniProtKB-UniRule"/>
</dbReference>
<dbReference type="CDD" id="cd00387">
    <property type="entry name" value="Ribosomal_L7_L12"/>
    <property type="match status" value="1"/>
</dbReference>
<dbReference type="FunFam" id="1.20.5.710:FF:000002">
    <property type="entry name" value="50S ribosomal protein L7/L12"/>
    <property type="match status" value="1"/>
</dbReference>
<dbReference type="FunFam" id="3.30.1390.10:FF:000001">
    <property type="entry name" value="50S ribosomal protein L7/L12"/>
    <property type="match status" value="1"/>
</dbReference>
<dbReference type="Gene3D" id="3.30.1390.10">
    <property type="match status" value="1"/>
</dbReference>
<dbReference type="Gene3D" id="1.20.5.710">
    <property type="entry name" value="Single helix bin"/>
    <property type="match status" value="1"/>
</dbReference>
<dbReference type="HAMAP" id="MF_00368">
    <property type="entry name" value="Ribosomal_bL12"/>
    <property type="match status" value="1"/>
</dbReference>
<dbReference type="InterPro" id="IPR000206">
    <property type="entry name" value="Ribosomal_bL12"/>
</dbReference>
<dbReference type="InterPro" id="IPR013823">
    <property type="entry name" value="Ribosomal_bL12_C"/>
</dbReference>
<dbReference type="InterPro" id="IPR014719">
    <property type="entry name" value="Ribosomal_bL12_C/ClpS-like"/>
</dbReference>
<dbReference type="InterPro" id="IPR008932">
    <property type="entry name" value="Ribosomal_bL12_oligo"/>
</dbReference>
<dbReference type="InterPro" id="IPR036235">
    <property type="entry name" value="Ribosomal_bL12_oligo_N_sf"/>
</dbReference>
<dbReference type="NCBIfam" id="TIGR00855">
    <property type="entry name" value="L12"/>
    <property type="match status" value="1"/>
</dbReference>
<dbReference type="PANTHER" id="PTHR45987">
    <property type="entry name" value="39S RIBOSOMAL PROTEIN L12"/>
    <property type="match status" value="1"/>
</dbReference>
<dbReference type="PANTHER" id="PTHR45987:SF4">
    <property type="entry name" value="LARGE RIBOSOMAL SUBUNIT PROTEIN BL12M"/>
    <property type="match status" value="1"/>
</dbReference>
<dbReference type="Pfam" id="PF00542">
    <property type="entry name" value="Ribosomal_L12"/>
    <property type="match status" value="1"/>
</dbReference>
<dbReference type="Pfam" id="PF16320">
    <property type="entry name" value="Ribosomal_L12_N"/>
    <property type="match status" value="1"/>
</dbReference>
<dbReference type="SUPFAM" id="SSF54736">
    <property type="entry name" value="ClpS-like"/>
    <property type="match status" value="1"/>
</dbReference>
<dbReference type="SUPFAM" id="SSF48300">
    <property type="entry name" value="Ribosomal protein L7/12, oligomerisation (N-terminal) domain"/>
    <property type="match status" value="1"/>
</dbReference>
<organism>
    <name type="scientific">Clostridium botulinum (strain 657 / Type Ba4)</name>
    <dbReference type="NCBI Taxonomy" id="515621"/>
    <lineage>
        <taxon>Bacteria</taxon>
        <taxon>Bacillati</taxon>
        <taxon>Bacillota</taxon>
        <taxon>Clostridia</taxon>
        <taxon>Eubacteriales</taxon>
        <taxon>Clostridiaceae</taxon>
        <taxon>Clostridium</taxon>
    </lineage>
</organism>
<reference key="1">
    <citation type="submission" date="2008-05" db="EMBL/GenBank/DDBJ databases">
        <title>Genome sequence of Clostridium botulinum Ba4 strain 657.</title>
        <authorList>
            <person name="Shrivastava S."/>
            <person name="Brown J.L."/>
            <person name="Bruce D."/>
            <person name="Detter C."/>
            <person name="Munk C."/>
            <person name="Smith L.A."/>
            <person name="Smith T.J."/>
            <person name="Sutton G."/>
            <person name="Brettin T.S."/>
        </authorList>
    </citation>
    <scope>NUCLEOTIDE SEQUENCE [LARGE SCALE GENOMIC DNA]</scope>
    <source>
        <strain>657 / Type Ba4</strain>
    </source>
</reference>
<sequence>MKKEEIIQAIKEMTVLELNELVEACEEEFGVSAAAPVAVAGAGAAAAGAAEEKTEFDVVLADAGSEKIKVIKAVREVTGLGLKEAKALVDGAPKTLKEAASKEDGEAIKAKLEEVGAKVELK</sequence>
<feature type="chain" id="PRO_1000205551" description="Large ribosomal subunit protein bL12">
    <location>
        <begin position="1"/>
        <end position="122"/>
    </location>
</feature>
<proteinExistence type="inferred from homology"/>
<accession>C3KVR0</accession>
<protein>
    <recommendedName>
        <fullName evidence="1">Large ribosomal subunit protein bL12</fullName>
    </recommendedName>
    <alternativeName>
        <fullName evidence="2">50S ribosomal protein L7/L12</fullName>
    </alternativeName>
</protein>
<name>RL7_CLOB6</name>